<name>LYSC_HUMAN</name>
<evidence type="ECO:0000255" key="1">
    <source>
        <dbReference type="PROSITE-ProRule" id="PRU00680"/>
    </source>
</evidence>
<evidence type="ECO:0000269" key="2">
    <source>
    </source>
</evidence>
<evidence type="ECO:0000269" key="3">
    <source>
    </source>
</evidence>
<evidence type="ECO:0000269" key="4">
    <source>
    </source>
</evidence>
<evidence type="ECO:0000269" key="5">
    <source>
    </source>
</evidence>
<evidence type="ECO:0000269" key="6">
    <source>
    </source>
</evidence>
<evidence type="ECO:0000269" key="7">
    <source>
    </source>
</evidence>
<evidence type="ECO:0000305" key="8"/>
<evidence type="ECO:0007829" key="9">
    <source>
        <dbReference type="PDB" id="1B7M"/>
    </source>
</evidence>
<evidence type="ECO:0007829" key="10">
    <source>
        <dbReference type="PDB" id="1BB3"/>
    </source>
</evidence>
<evidence type="ECO:0007829" key="11">
    <source>
        <dbReference type="PDB" id="2NWD"/>
    </source>
</evidence>
<evidence type="ECO:0007829" key="12">
    <source>
        <dbReference type="PDB" id="7AP7"/>
    </source>
</evidence>
<evidence type="ECO:0007829" key="13">
    <source>
        <dbReference type="PDB" id="8QUT"/>
    </source>
</evidence>
<evidence type="ECO:0007829" key="14">
    <source>
        <dbReference type="PDB" id="8R4A"/>
    </source>
</evidence>
<feature type="signal peptide" evidence="2 3 4 5 6">
    <location>
        <begin position="1"/>
        <end position="18"/>
    </location>
</feature>
<feature type="chain" id="PRO_0000018467" description="Lysozyme C">
    <location>
        <begin position="19"/>
        <end position="148"/>
    </location>
</feature>
<feature type="domain" description="C-type lysozyme" evidence="1">
    <location>
        <begin position="19"/>
        <end position="148"/>
    </location>
</feature>
<feature type="active site">
    <location>
        <position position="53"/>
    </location>
</feature>
<feature type="active site">
    <location>
        <position position="71"/>
    </location>
</feature>
<feature type="disulfide bond">
    <location>
        <begin position="24"/>
        <end position="146"/>
    </location>
</feature>
<feature type="disulfide bond">
    <location>
        <begin position="48"/>
        <end position="134"/>
    </location>
</feature>
<feature type="disulfide bond">
    <location>
        <begin position="83"/>
        <end position="99"/>
    </location>
</feature>
<feature type="disulfide bond">
    <location>
        <begin position="95"/>
        <end position="113"/>
    </location>
</feature>
<feature type="sequence variant" id="VAR_004280" description="In AMYLD5; dbSNP:rs121913547." evidence="7">
    <original>I</original>
    <variation>T</variation>
    <location>
        <position position="74"/>
    </location>
</feature>
<feature type="sequence variant" id="VAR_004281" description="In AMYLD5; dbSNP:rs121913548." evidence="7">
    <original>D</original>
    <variation>H</variation>
    <location>
        <position position="85"/>
    </location>
</feature>
<feature type="sequence variant" id="VAR_012050" description="In dbSNP:rs1800973.">
    <original>T</original>
    <variation>N</variation>
    <location>
        <position position="88"/>
    </location>
</feature>
<feature type="sequence conflict" description="In Ref. 5; AAC63078." evidence="8" ref="5">
    <original>V</original>
    <variation>A</variation>
    <location>
        <position position="10"/>
    </location>
</feature>
<feature type="sequence conflict" description="In Ref. 1; AAA36188." evidence="8" ref="1">
    <original>I</original>
    <variation>M</variation>
    <location>
        <position position="41"/>
    </location>
</feature>
<feature type="sequence conflict" description="In Ref. 5; AAC63078." evidence="8" ref="5">
    <original>V</original>
    <variation>A</variation>
    <location>
        <position position="111"/>
    </location>
</feature>
<feature type="sequence conflict" description="In Ref. 5; AAC63078." evidence="8" ref="5">
    <original>I</original>
    <variation>V</variation>
    <location>
        <position position="124"/>
    </location>
</feature>
<feature type="sequence conflict" description="In Ref. 5; AAC63078." evidence="8" ref="5">
    <original>V</original>
    <variation>A</variation>
    <location>
        <position position="128"/>
    </location>
</feature>
<feature type="sequence conflict" description="In Ref. 5; AAC63078." evidence="8" ref="5">
    <original>N</original>
    <variation>D</variation>
    <location>
        <position position="136"/>
    </location>
</feature>
<feature type="helix" evidence="11">
    <location>
        <begin position="23"/>
        <end position="32"/>
    </location>
</feature>
<feature type="helix" evidence="10">
    <location>
        <begin position="38"/>
        <end position="40"/>
    </location>
</feature>
<feature type="helix" evidence="11">
    <location>
        <begin position="43"/>
        <end position="54"/>
    </location>
</feature>
<feature type="strand" evidence="11">
    <location>
        <begin position="55"/>
        <end position="57"/>
    </location>
</feature>
<feature type="strand" evidence="11">
    <location>
        <begin position="61"/>
        <end position="63"/>
    </location>
</feature>
<feature type="turn" evidence="11">
    <location>
        <begin position="65"/>
        <end position="67"/>
    </location>
</feature>
<feature type="strand" evidence="11">
    <location>
        <begin position="70"/>
        <end position="72"/>
    </location>
</feature>
<feature type="turn" evidence="11">
    <location>
        <begin position="73"/>
        <end position="76"/>
    </location>
</feature>
<feature type="turn" evidence="11">
    <location>
        <begin position="79"/>
        <end position="81"/>
    </location>
</feature>
<feature type="strand" evidence="11">
    <location>
        <begin position="82"/>
        <end position="84"/>
    </location>
</feature>
<feature type="strand" evidence="12">
    <location>
        <begin position="86"/>
        <end position="88"/>
    </location>
</feature>
<feature type="strand" evidence="13">
    <location>
        <begin position="92"/>
        <end position="94"/>
    </location>
</feature>
<feature type="helix" evidence="11">
    <location>
        <begin position="99"/>
        <end position="103"/>
    </location>
</feature>
<feature type="strand" evidence="11">
    <location>
        <begin position="104"/>
        <end position="106"/>
    </location>
</feature>
<feature type="helix" evidence="11">
    <location>
        <begin position="108"/>
        <end position="119"/>
    </location>
</feature>
<feature type="strand" evidence="9">
    <location>
        <begin position="120"/>
        <end position="122"/>
    </location>
</feature>
<feature type="helix" evidence="11">
    <location>
        <begin position="123"/>
        <end position="126"/>
    </location>
</feature>
<feature type="helix" evidence="11">
    <location>
        <begin position="128"/>
        <end position="133"/>
    </location>
</feature>
<feature type="turn" evidence="11">
    <location>
        <begin position="134"/>
        <end position="136"/>
    </location>
</feature>
<feature type="strand" evidence="14">
    <location>
        <begin position="137"/>
        <end position="139"/>
    </location>
</feature>
<feature type="helix" evidence="11">
    <location>
        <begin position="140"/>
        <end position="142"/>
    </location>
</feature>
<feature type="turn" evidence="11">
    <location>
        <begin position="143"/>
        <end position="145"/>
    </location>
</feature>
<organism>
    <name type="scientific">Homo sapiens</name>
    <name type="common">Human</name>
    <dbReference type="NCBI Taxonomy" id="9606"/>
    <lineage>
        <taxon>Eukaryota</taxon>
        <taxon>Metazoa</taxon>
        <taxon>Chordata</taxon>
        <taxon>Craniata</taxon>
        <taxon>Vertebrata</taxon>
        <taxon>Euteleostomi</taxon>
        <taxon>Mammalia</taxon>
        <taxon>Eutheria</taxon>
        <taxon>Euarchontoglires</taxon>
        <taxon>Primates</taxon>
        <taxon>Haplorrhini</taxon>
        <taxon>Catarrhini</taxon>
        <taxon>Hominidae</taxon>
        <taxon>Homo</taxon>
    </lineage>
</organism>
<gene>
    <name type="primary">LYZ</name>
    <name type="synonym">LZM</name>
</gene>
<keyword id="KW-0002">3D-structure</keyword>
<keyword id="KW-0034">Amyloid</keyword>
<keyword id="KW-1008">Amyloidosis</keyword>
<keyword id="KW-0929">Antimicrobial</keyword>
<keyword id="KW-0081">Bacteriolytic enzyme</keyword>
<keyword id="KW-0903">Direct protein sequencing</keyword>
<keyword id="KW-0225">Disease variant</keyword>
<keyword id="KW-1015">Disulfide bond</keyword>
<keyword id="KW-0326">Glycosidase</keyword>
<keyword id="KW-0378">Hydrolase</keyword>
<keyword id="KW-1267">Proteomics identification</keyword>
<keyword id="KW-1185">Reference proteome</keyword>
<keyword id="KW-0964">Secreted</keyword>
<keyword id="KW-0732">Signal</keyword>
<protein>
    <recommendedName>
        <fullName>Lysozyme C</fullName>
        <ecNumber>3.2.1.17</ecNumber>
    </recommendedName>
    <alternativeName>
        <fullName>1,4-beta-N-acetylmuramidase C</fullName>
    </alternativeName>
</protein>
<accession>P61626</accession>
<accession>P00695</accession>
<accession>Q13170</accession>
<accession>Q9UCF8</accession>
<dbReference type="EC" id="3.2.1.17"/>
<dbReference type="EMBL" id="M21119">
    <property type="protein sequence ID" value="AAA36188.1"/>
    <property type="molecule type" value="mRNA"/>
</dbReference>
<dbReference type="EMBL" id="J03801">
    <property type="protein sequence ID" value="AAA59535.1"/>
    <property type="molecule type" value="mRNA"/>
</dbReference>
<dbReference type="EMBL" id="M19045">
    <property type="protein sequence ID" value="AAA59536.1"/>
    <property type="molecule type" value="mRNA"/>
</dbReference>
<dbReference type="EMBL" id="X14008">
    <property type="protein sequence ID" value="CAA32175.1"/>
    <property type="status" value="ALT_INIT"/>
    <property type="molecule type" value="Genomic_DNA"/>
</dbReference>
<dbReference type="EMBL" id="U25677">
    <property type="protein sequence ID" value="AAC63078.1"/>
    <property type="molecule type" value="mRNA"/>
</dbReference>
<dbReference type="EMBL" id="BC004147">
    <property type="protein sequence ID" value="AAH04147.1"/>
    <property type="molecule type" value="mRNA"/>
</dbReference>
<dbReference type="CCDS" id="CCDS8989.1"/>
<dbReference type="PIR" id="S04938">
    <property type="entry name" value="LZHU"/>
</dbReference>
<dbReference type="RefSeq" id="NP_000230.1">
    <property type="nucleotide sequence ID" value="NM_000239.3"/>
</dbReference>
<dbReference type="PDB" id="133L">
    <property type="method" value="X-ray"/>
    <property type="resolution" value="1.77 A"/>
    <property type="chains" value="A=19-148"/>
</dbReference>
<dbReference type="PDB" id="134L">
    <property type="method" value="X-ray"/>
    <property type="resolution" value="1.77 A"/>
    <property type="chains" value="A=19-148"/>
</dbReference>
<dbReference type="PDB" id="1B5U">
    <property type="method" value="X-ray"/>
    <property type="resolution" value="1.80 A"/>
    <property type="chains" value="A=19-148"/>
</dbReference>
<dbReference type="PDB" id="1B5V">
    <property type="method" value="X-ray"/>
    <property type="resolution" value="2.17 A"/>
    <property type="chains" value="A=19-148"/>
</dbReference>
<dbReference type="PDB" id="1B5W">
    <property type="method" value="X-ray"/>
    <property type="resolution" value="2.17 A"/>
    <property type="chains" value="A=19-148"/>
</dbReference>
<dbReference type="PDB" id="1B5X">
    <property type="method" value="X-ray"/>
    <property type="resolution" value="2.00 A"/>
    <property type="chains" value="A=19-148"/>
</dbReference>
<dbReference type="PDB" id="1B5Y">
    <property type="method" value="X-ray"/>
    <property type="resolution" value="2.20 A"/>
    <property type="chains" value="A=19-148"/>
</dbReference>
<dbReference type="PDB" id="1B5Z">
    <property type="method" value="X-ray"/>
    <property type="resolution" value="2.20 A"/>
    <property type="chains" value="A/B=19-148"/>
</dbReference>
<dbReference type="PDB" id="1B7L">
    <property type="method" value="X-ray"/>
    <property type="resolution" value="1.80 A"/>
    <property type="chains" value="A=19-148"/>
</dbReference>
<dbReference type="PDB" id="1B7M">
    <property type="method" value="X-ray"/>
    <property type="resolution" value="2.20 A"/>
    <property type="chains" value="A=19-148"/>
</dbReference>
<dbReference type="PDB" id="1B7N">
    <property type="method" value="X-ray"/>
    <property type="resolution" value="1.80 A"/>
    <property type="chains" value="A=19-148"/>
</dbReference>
<dbReference type="PDB" id="1B7O">
    <property type="method" value="X-ray"/>
    <property type="resolution" value="1.80 A"/>
    <property type="chains" value="A=19-148"/>
</dbReference>
<dbReference type="PDB" id="1B7P">
    <property type="method" value="X-ray"/>
    <property type="resolution" value="2.00 A"/>
    <property type="chains" value="A=19-148"/>
</dbReference>
<dbReference type="PDB" id="1B7Q">
    <property type="method" value="X-ray"/>
    <property type="resolution" value="2.00 A"/>
    <property type="chains" value="A=19-148"/>
</dbReference>
<dbReference type="PDB" id="1B7R">
    <property type="method" value="X-ray"/>
    <property type="resolution" value="1.80 A"/>
    <property type="chains" value="A=19-148"/>
</dbReference>
<dbReference type="PDB" id="1B7S">
    <property type="method" value="X-ray"/>
    <property type="resolution" value="2.00 A"/>
    <property type="chains" value="A=19-148"/>
</dbReference>
<dbReference type="PDB" id="1BB3">
    <property type="method" value="X-ray"/>
    <property type="resolution" value="1.80 A"/>
    <property type="chains" value="A/B=19-148"/>
</dbReference>
<dbReference type="PDB" id="1BB4">
    <property type="method" value="X-ray"/>
    <property type="resolution" value="2.23 A"/>
    <property type="chains" value="A/B=19-148"/>
</dbReference>
<dbReference type="PDB" id="1BB5">
    <property type="method" value="X-ray"/>
    <property type="resolution" value="1.80 A"/>
    <property type="chains" value="A/B=19-148"/>
</dbReference>
<dbReference type="PDB" id="1C43">
    <property type="method" value="X-ray"/>
    <property type="resolution" value="1.80 A"/>
    <property type="chains" value="A=19-148"/>
</dbReference>
<dbReference type="PDB" id="1C45">
    <property type="method" value="X-ray"/>
    <property type="resolution" value="1.80 A"/>
    <property type="chains" value="A=19-148"/>
</dbReference>
<dbReference type="PDB" id="1C46">
    <property type="method" value="X-ray"/>
    <property type="resolution" value="2.20 A"/>
    <property type="chains" value="A=19-148"/>
</dbReference>
<dbReference type="PDB" id="1C7P">
    <property type="method" value="X-ray"/>
    <property type="resolution" value="2.40 A"/>
    <property type="chains" value="A=16-148"/>
</dbReference>
<dbReference type="PDB" id="1CJ6">
    <property type="method" value="X-ray"/>
    <property type="resolution" value="1.80 A"/>
    <property type="chains" value="A=19-148"/>
</dbReference>
<dbReference type="PDB" id="1CJ7">
    <property type="method" value="X-ray"/>
    <property type="resolution" value="1.80 A"/>
    <property type="chains" value="A=19-148"/>
</dbReference>
<dbReference type="PDB" id="1CJ8">
    <property type="method" value="X-ray"/>
    <property type="resolution" value="1.80 A"/>
    <property type="chains" value="A=19-148"/>
</dbReference>
<dbReference type="PDB" id="1CJ9">
    <property type="method" value="X-ray"/>
    <property type="resolution" value="1.80 A"/>
    <property type="chains" value="A=19-148"/>
</dbReference>
<dbReference type="PDB" id="1CKC">
    <property type="method" value="X-ray"/>
    <property type="resolution" value="1.80 A"/>
    <property type="chains" value="A=19-148"/>
</dbReference>
<dbReference type="PDB" id="1CKD">
    <property type="method" value="X-ray"/>
    <property type="resolution" value="1.80 A"/>
    <property type="chains" value="A=19-148"/>
</dbReference>
<dbReference type="PDB" id="1CKF">
    <property type="method" value="X-ray"/>
    <property type="resolution" value="1.80 A"/>
    <property type="chains" value="A=19-148"/>
</dbReference>
<dbReference type="PDB" id="1CKG">
    <property type="method" value="X-ray"/>
    <property type="resolution" value="2.20 A"/>
    <property type="chains" value="A/B=19-148"/>
</dbReference>
<dbReference type="PDB" id="1CKH">
    <property type="method" value="X-ray"/>
    <property type="resolution" value="2.00 A"/>
    <property type="chains" value="A=19-148"/>
</dbReference>
<dbReference type="PDB" id="1D6P">
    <property type="method" value="X-ray"/>
    <property type="resolution" value="2.23 A"/>
    <property type="chains" value="A=19-148"/>
</dbReference>
<dbReference type="PDB" id="1D6Q">
    <property type="method" value="X-ray"/>
    <property type="resolution" value="1.96 A"/>
    <property type="chains" value="A=19-148"/>
</dbReference>
<dbReference type="PDB" id="1DI3">
    <property type="method" value="X-ray"/>
    <property type="resolution" value="1.80 A"/>
    <property type="chains" value="A=19-148"/>
</dbReference>
<dbReference type="PDB" id="1DI4">
    <property type="method" value="X-ray"/>
    <property type="resolution" value="2.00 A"/>
    <property type="chains" value="A=19-148"/>
</dbReference>
<dbReference type="PDB" id="1DI5">
    <property type="method" value="X-ray"/>
    <property type="resolution" value="2.20 A"/>
    <property type="chains" value="A=19-148"/>
</dbReference>
<dbReference type="PDB" id="1EQ4">
    <property type="method" value="X-ray"/>
    <property type="resolution" value="1.80 A"/>
    <property type="chains" value="A=19-148"/>
</dbReference>
<dbReference type="PDB" id="1EQ5">
    <property type="method" value="X-ray"/>
    <property type="resolution" value="1.80 A"/>
    <property type="chains" value="A=19-148"/>
</dbReference>
<dbReference type="PDB" id="1EQE">
    <property type="method" value="X-ray"/>
    <property type="resolution" value="1.80 A"/>
    <property type="chains" value="A=19-148"/>
</dbReference>
<dbReference type="PDB" id="1GAY">
    <property type="method" value="X-ray"/>
    <property type="resolution" value="1.80 A"/>
    <property type="chains" value="A=19-148"/>
</dbReference>
<dbReference type="PDB" id="1GAZ">
    <property type="method" value="X-ray"/>
    <property type="resolution" value="1.80 A"/>
    <property type="chains" value="A=19-148"/>
</dbReference>
<dbReference type="PDB" id="1GB0">
    <property type="method" value="X-ray"/>
    <property type="resolution" value="1.80 A"/>
    <property type="chains" value="A=19-148"/>
</dbReference>
<dbReference type="PDB" id="1GB2">
    <property type="method" value="X-ray"/>
    <property type="resolution" value="1.80 A"/>
    <property type="chains" value="A=19-148"/>
</dbReference>
<dbReference type="PDB" id="1GB3">
    <property type="method" value="X-ray"/>
    <property type="resolution" value="1.80 A"/>
    <property type="chains" value="A=19-148"/>
</dbReference>
<dbReference type="PDB" id="1GB5">
    <property type="method" value="X-ray"/>
    <property type="resolution" value="1.80 A"/>
    <property type="chains" value="A=19-148"/>
</dbReference>
<dbReference type="PDB" id="1GB6">
    <property type="method" value="X-ray"/>
    <property type="resolution" value="1.80 A"/>
    <property type="chains" value="A=19-148"/>
</dbReference>
<dbReference type="PDB" id="1GB7">
    <property type="method" value="X-ray"/>
    <property type="resolution" value="1.80 A"/>
    <property type="chains" value="A=19-148"/>
</dbReference>
<dbReference type="PDB" id="1GB8">
    <property type="method" value="X-ray"/>
    <property type="resolution" value="1.80 A"/>
    <property type="chains" value="A=19-148"/>
</dbReference>
<dbReference type="PDB" id="1GB9">
    <property type="method" value="X-ray"/>
    <property type="resolution" value="1.80 A"/>
    <property type="chains" value="A=19-148"/>
</dbReference>
<dbReference type="PDB" id="1GBO">
    <property type="method" value="X-ray"/>
    <property type="resolution" value="1.80 A"/>
    <property type="chains" value="A=19-148"/>
</dbReference>
<dbReference type="PDB" id="1GBW">
    <property type="method" value="X-ray"/>
    <property type="resolution" value="1.80 A"/>
    <property type="chains" value="A=19-148"/>
</dbReference>
<dbReference type="PDB" id="1GBX">
    <property type="method" value="X-ray"/>
    <property type="resolution" value="1.80 A"/>
    <property type="chains" value="A=19-148"/>
</dbReference>
<dbReference type="PDB" id="1GBY">
    <property type="method" value="X-ray"/>
    <property type="resolution" value="1.80 A"/>
    <property type="chains" value="A=19-148"/>
</dbReference>
<dbReference type="PDB" id="1GBZ">
    <property type="method" value="X-ray"/>
    <property type="resolution" value="1.80 A"/>
    <property type="chains" value="A=19-148"/>
</dbReference>
<dbReference type="PDB" id="1GDW">
    <property type="method" value="X-ray"/>
    <property type="resolution" value="1.80 A"/>
    <property type="chains" value="A=19-148"/>
</dbReference>
<dbReference type="PDB" id="1GDX">
    <property type="method" value="X-ray"/>
    <property type="resolution" value="1.80 A"/>
    <property type="chains" value="A=19-148"/>
</dbReference>
<dbReference type="PDB" id="1GE0">
    <property type="method" value="X-ray"/>
    <property type="resolution" value="1.80 A"/>
    <property type="chains" value="A=19-148"/>
</dbReference>
<dbReference type="PDB" id="1GE1">
    <property type="method" value="X-ray"/>
    <property type="resolution" value="1.70 A"/>
    <property type="chains" value="A=19-148"/>
</dbReference>
<dbReference type="PDB" id="1GE2">
    <property type="method" value="X-ray"/>
    <property type="resolution" value="2.00 A"/>
    <property type="chains" value="A=19-148"/>
</dbReference>
<dbReference type="PDB" id="1GE3">
    <property type="method" value="X-ray"/>
    <property type="resolution" value="1.80 A"/>
    <property type="chains" value="A=19-148"/>
</dbReference>
<dbReference type="PDB" id="1GE4">
    <property type="method" value="X-ray"/>
    <property type="resolution" value="1.80 A"/>
    <property type="chains" value="A=19-148"/>
</dbReference>
<dbReference type="PDB" id="1GEV">
    <property type="method" value="X-ray"/>
    <property type="resolution" value="2.10 A"/>
    <property type="chains" value="A=19-148"/>
</dbReference>
<dbReference type="PDB" id="1GEZ">
    <property type="method" value="X-ray"/>
    <property type="resolution" value="1.80 A"/>
    <property type="chains" value="A=19-148"/>
</dbReference>
<dbReference type="PDB" id="1GF0">
    <property type="method" value="X-ray"/>
    <property type="resolution" value="1.80 A"/>
    <property type="chains" value="A=19-148"/>
</dbReference>
<dbReference type="PDB" id="1GF3">
    <property type="method" value="X-ray"/>
    <property type="resolution" value="1.80 A"/>
    <property type="chains" value="A=19-148"/>
</dbReference>
<dbReference type="PDB" id="1GF4">
    <property type="method" value="X-ray"/>
    <property type="resolution" value="1.80 A"/>
    <property type="chains" value="A=19-148"/>
</dbReference>
<dbReference type="PDB" id="1GF5">
    <property type="method" value="X-ray"/>
    <property type="resolution" value="1.80 A"/>
    <property type="chains" value="A=19-148"/>
</dbReference>
<dbReference type="PDB" id="1GF6">
    <property type="method" value="X-ray"/>
    <property type="resolution" value="1.80 A"/>
    <property type="chains" value="A=19-148"/>
</dbReference>
<dbReference type="PDB" id="1GF7">
    <property type="method" value="X-ray"/>
    <property type="resolution" value="1.80 A"/>
    <property type="chains" value="A=19-148"/>
</dbReference>
<dbReference type="PDB" id="1GF8">
    <property type="method" value="X-ray"/>
    <property type="resolution" value="1.80 A"/>
    <property type="chains" value="A=19-148"/>
</dbReference>
<dbReference type="PDB" id="1GF9">
    <property type="method" value="X-ray"/>
    <property type="resolution" value="1.80 A"/>
    <property type="chains" value="A=19-148"/>
</dbReference>
<dbReference type="PDB" id="1GFA">
    <property type="method" value="X-ray"/>
    <property type="resolution" value="1.80 A"/>
    <property type="chains" value="A=19-148"/>
</dbReference>
<dbReference type="PDB" id="1GFE">
    <property type="method" value="X-ray"/>
    <property type="resolution" value="1.80 A"/>
    <property type="chains" value="A=19-148"/>
</dbReference>
<dbReference type="PDB" id="1GFG">
    <property type="method" value="X-ray"/>
    <property type="resolution" value="1.80 A"/>
    <property type="chains" value="A=19-148"/>
</dbReference>
<dbReference type="PDB" id="1GFH">
    <property type="method" value="X-ray"/>
    <property type="resolution" value="1.80 A"/>
    <property type="chains" value="A=19-148"/>
</dbReference>
<dbReference type="PDB" id="1GFJ">
    <property type="method" value="X-ray"/>
    <property type="resolution" value="1.80 A"/>
    <property type="chains" value="A=19-148"/>
</dbReference>
<dbReference type="PDB" id="1GFK">
    <property type="method" value="X-ray"/>
    <property type="resolution" value="1.80 A"/>
    <property type="chains" value="A=19-148"/>
</dbReference>
<dbReference type="PDB" id="1GFR">
    <property type="method" value="X-ray"/>
    <property type="resolution" value="1.80 A"/>
    <property type="chains" value="A=19-148"/>
</dbReference>
<dbReference type="PDB" id="1GFT">
    <property type="method" value="X-ray"/>
    <property type="resolution" value="1.80 A"/>
    <property type="chains" value="A=19-148"/>
</dbReference>
<dbReference type="PDB" id="1GFU">
    <property type="method" value="X-ray"/>
    <property type="resolution" value="1.80 A"/>
    <property type="chains" value="A=19-148"/>
</dbReference>
<dbReference type="PDB" id="1GFV">
    <property type="method" value="X-ray"/>
    <property type="resolution" value="1.80 A"/>
    <property type="chains" value="A=19-148"/>
</dbReference>
<dbReference type="PDB" id="1HNL">
    <property type="method" value="X-ray"/>
    <property type="resolution" value="1.80 A"/>
    <property type="chains" value="A=19-148"/>
</dbReference>
<dbReference type="PDB" id="1I1Z">
    <property type="method" value="X-ray"/>
    <property type="resolution" value="1.80 A"/>
    <property type="chains" value="A=19-148"/>
</dbReference>
<dbReference type="PDB" id="1I20">
    <property type="method" value="X-ray"/>
    <property type="resolution" value="1.90 A"/>
    <property type="chains" value="A=19-148"/>
</dbReference>
<dbReference type="PDB" id="1I22">
    <property type="method" value="X-ray"/>
    <property type="resolution" value="1.80 A"/>
    <property type="chains" value="A/B/C/D=19-148"/>
</dbReference>
<dbReference type="PDB" id="1INU">
    <property type="method" value="X-ray"/>
    <property type="resolution" value="1.80 A"/>
    <property type="chains" value="A=19-148"/>
</dbReference>
<dbReference type="PDB" id="1IOC">
    <property type="method" value="X-ray"/>
    <property type="resolution" value="2.40 A"/>
    <property type="chains" value="A=19-148"/>
</dbReference>
<dbReference type="PDB" id="1IP1">
    <property type="method" value="X-ray"/>
    <property type="resolution" value="1.80 A"/>
    <property type="chains" value="A=19-148"/>
</dbReference>
<dbReference type="PDB" id="1IP2">
    <property type="method" value="X-ray"/>
    <property type="resolution" value="1.80 A"/>
    <property type="chains" value="A=19-148"/>
</dbReference>
<dbReference type="PDB" id="1IP3">
    <property type="method" value="X-ray"/>
    <property type="resolution" value="1.80 A"/>
    <property type="chains" value="A/B=19-148"/>
</dbReference>
<dbReference type="PDB" id="1IP4">
    <property type="method" value="X-ray"/>
    <property type="resolution" value="1.80 A"/>
    <property type="chains" value="A=19-148"/>
</dbReference>
<dbReference type="PDB" id="1IP5">
    <property type="method" value="X-ray"/>
    <property type="resolution" value="1.80 A"/>
    <property type="chains" value="A=19-148"/>
</dbReference>
<dbReference type="PDB" id="1IP6">
    <property type="method" value="X-ray"/>
    <property type="resolution" value="1.80 A"/>
    <property type="chains" value="A=19-148"/>
</dbReference>
<dbReference type="PDB" id="1IP7">
    <property type="method" value="X-ray"/>
    <property type="resolution" value="1.90 A"/>
    <property type="chains" value="A/B=19-146"/>
</dbReference>
<dbReference type="PDB" id="1IWT">
    <property type="method" value="X-ray"/>
    <property type="resolution" value="1.40 A"/>
    <property type="chains" value="A=19-148"/>
</dbReference>
<dbReference type="PDB" id="1IWU">
    <property type="method" value="X-ray"/>
    <property type="resolution" value="1.40 A"/>
    <property type="chains" value="A=19-148"/>
</dbReference>
<dbReference type="PDB" id="1IWV">
    <property type="method" value="X-ray"/>
    <property type="resolution" value="1.40 A"/>
    <property type="chains" value="A=19-148"/>
</dbReference>
<dbReference type="PDB" id="1IWW">
    <property type="method" value="X-ray"/>
    <property type="resolution" value="1.40 A"/>
    <property type="chains" value="A=19-148"/>
</dbReference>
<dbReference type="PDB" id="1IWX">
    <property type="method" value="X-ray"/>
    <property type="resolution" value="1.40 A"/>
    <property type="chains" value="A=19-148"/>
</dbReference>
<dbReference type="PDB" id="1IWY">
    <property type="method" value="X-ray"/>
    <property type="resolution" value="1.40 A"/>
    <property type="chains" value="A=19-148"/>
</dbReference>
<dbReference type="PDB" id="1IWZ">
    <property type="method" value="X-ray"/>
    <property type="resolution" value="1.48 A"/>
    <property type="chains" value="A=19-148"/>
</dbReference>
<dbReference type="PDB" id="1IX0">
    <property type="method" value="X-ray"/>
    <property type="resolution" value="1.80 A"/>
    <property type="chains" value="A=19-148"/>
</dbReference>
<dbReference type="PDB" id="1IY3">
    <property type="method" value="NMR"/>
    <property type="chains" value="A=19-148"/>
</dbReference>
<dbReference type="PDB" id="1IY4">
    <property type="method" value="NMR"/>
    <property type="chains" value="A=19-148"/>
</dbReference>
<dbReference type="PDB" id="1JKA">
    <property type="method" value="X-ray"/>
    <property type="resolution" value="1.66 A"/>
    <property type="chains" value="A=19-148"/>
</dbReference>
<dbReference type="PDB" id="1JKB">
    <property type="method" value="X-ray"/>
    <property type="resolution" value="1.66 A"/>
    <property type="chains" value="A=19-148"/>
</dbReference>
<dbReference type="PDB" id="1JKC">
    <property type="method" value="X-ray"/>
    <property type="resolution" value="1.60 A"/>
    <property type="chains" value="A=19-148"/>
</dbReference>
<dbReference type="PDB" id="1JKD">
    <property type="method" value="X-ray"/>
    <property type="resolution" value="1.80 A"/>
    <property type="chains" value="A=19-148"/>
</dbReference>
<dbReference type="PDB" id="1JSF">
    <property type="method" value="X-ray"/>
    <property type="resolution" value="1.15 A"/>
    <property type="chains" value="A=19-148"/>
</dbReference>
<dbReference type="PDB" id="1JWR">
    <property type="method" value="X-ray"/>
    <property type="resolution" value="1.40 A"/>
    <property type="chains" value="A=19-148"/>
</dbReference>
<dbReference type="PDB" id="1LAA">
    <property type="method" value="X-ray"/>
    <property type="resolution" value="1.77 A"/>
    <property type="chains" value="A=19-148"/>
</dbReference>
<dbReference type="PDB" id="1LHH">
    <property type="method" value="X-ray"/>
    <property type="resolution" value="1.80 A"/>
    <property type="chains" value="A=19-148"/>
</dbReference>
<dbReference type="PDB" id="1LHI">
    <property type="method" value="X-ray"/>
    <property type="resolution" value="1.80 A"/>
    <property type="chains" value="A=19-148"/>
</dbReference>
<dbReference type="PDB" id="1LHJ">
    <property type="method" value="X-ray"/>
    <property type="resolution" value="1.80 A"/>
    <property type="chains" value="A=19-148"/>
</dbReference>
<dbReference type="PDB" id="1LHK">
    <property type="method" value="X-ray"/>
    <property type="resolution" value="1.80 A"/>
    <property type="chains" value="A=19-148"/>
</dbReference>
<dbReference type="PDB" id="1LHL">
    <property type="method" value="X-ray"/>
    <property type="resolution" value="1.80 A"/>
    <property type="chains" value="A=19-148"/>
</dbReference>
<dbReference type="PDB" id="1LHM">
    <property type="method" value="X-ray"/>
    <property type="resolution" value="1.80 A"/>
    <property type="chains" value="A=19-148"/>
</dbReference>
<dbReference type="PDB" id="1LMT">
    <property type="method" value="X-ray"/>
    <property type="resolution" value="1.60 A"/>
    <property type="chains" value="A=19-148"/>
</dbReference>
<dbReference type="PDB" id="1LOZ">
    <property type="method" value="X-ray"/>
    <property type="resolution" value="1.80 A"/>
    <property type="chains" value="A=19-148"/>
</dbReference>
<dbReference type="PDB" id="1LYY">
    <property type="method" value="X-ray"/>
    <property type="resolution" value="1.80 A"/>
    <property type="chains" value="A=19-148"/>
</dbReference>
<dbReference type="PDB" id="1LZ1">
    <property type="method" value="X-ray"/>
    <property type="resolution" value="1.50 A"/>
    <property type="chains" value="A=19-148"/>
</dbReference>
<dbReference type="PDB" id="1LZ4">
    <property type="method" value="X-ray"/>
    <property type="resolution" value="1.80 A"/>
    <property type="chains" value="A=19-148"/>
</dbReference>
<dbReference type="PDB" id="1LZ5">
    <property type="method" value="X-ray"/>
    <property type="resolution" value="1.80 A"/>
    <property type="chains" value="A=19-144"/>
</dbReference>
<dbReference type="PDB" id="1LZ6">
    <property type="method" value="X-ray"/>
    <property type="resolution" value="1.80 A"/>
    <property type="chains" value="A=19-140"/>
</dbReference>
<dbReference type="PDB" id="1LZR">
    <property type="method" value="X-ray"/>
    <property type="resolution" value="1.50 A"/>
    <property type="chains" value="A=19-148"/>
</dbReference>
<dbReference type="PDB" id="1LZS">
    <property type="method" value="X-ray"/>
    <property type="resolution" value="1.60 A"/>
    <property type="chains" value="A/B=19-148"/>
</dbReference>
<dbReference type="PDB" id="1OP9">
    <property type="method" value="X-ray"/>
    <property type="resolution" value="1.86 A"/>
    <property type="chains" value="B=19-148"/>
</dbReference>
<dbReference type="PDB" id="1OUA">
    <property type="method" value="X-ray"/>
    <property type="resolution" value="1.80 A"/>
    <property type="chains" value="A=19-148"/>
</dbReference>
<dbReference type="PDB" id="1OUB">
    <property type="method" value="X-ray"/>
    <property type="resolution" value="1.80 A"/>
    <property type="chains" value="A=19-148"/>
</dbReference>
<dbReference type="PDB" id="1OUC">
    <property type="method" value="X-ray"/>
    <property type="resolution" value="1.80 A"/>
    <property type="chains" value="A=19-148"/>
</dbReference>
<dbReference type="PDB" id="1OUD">
    <property type="method" value="X-ray"/>
    <property type="resolution" value="1.80 A"/>
    <property type="chains" value="A=19-148"/>
</dbReference>
<dbReference type="PDB" id="1OUE">
    <property type="method" value="X-ray"/>
    <property type="resolution" value="1.80 A"/>
    <property type="chains" value="A=19-148"/>
</dbReference>
<dbReference type="PDB" id="1OUF">
    <property type="method" value="X-ray"/>
    <property type="resolution" value="1.80 A"/>
    <property type="chains" value="A=19-147"/>
</dbReference>
<dbReference type="PDB" id="1OUG">
    <property type="method" value="X-ray"/>
    <property type="resolution" value="1.80 A"/>
    <property type="chains" value="A=19-148"/>
</dbReference>
<dbReference type="PDB" id="1OUH">
    <property type="method" value="X-ray"/>
    <property type="resolution" value="1.80 A"/>
    <property type="chains" value="A=19-148"/>
</dbReference>
<dbReference type="PDB" id="1OUI">
    <property type="method" value="X-ray"/>
    <property type="resolution" value="1.80 A"/>
    <property type="chains" value="A=19-148"/>
</dbReference>
<dbReference type="PDB" id="1OUJ">
    <property type="method" value="X-ray"/>
    <property type="resolution" value="1.80 A"/>
    <property type="chains" value="A=19-148"/>
</dbReference>
<dbReference type="PDB" id="1QSW">
    <property type="method" value="X-ray"/>
    <property type="resolution" value="1.85 A"/>
    <property type="chains" value="A/B/C/D=19-148"/>
</dbReference>
<dbReference type="PDB" id="1RE2">
    <property type="method" value="X-ray"/>
    <property type="resolution" value="2.30 A"/>
    <property type="chains" value="A=19-148"/>
</dbReference>
<dbReference type="PDB" id="1REM">
    <property type="method" value="X-ray"/>
    <property type="resolution" value="2.10 A"/>
    <property type="chains" value="A=19-148"/>
</dbReference>
<dbReference type="PDB" id="1REX">
    <property type="method" value="X-ray"/>
    <property type="resolution" value="1.50 A"/>
    <property type="chains" value="A=19-148"/>
</dbReference>
<dbReference type="PDB" id="1REY">
    <property type="method" value="X-ray"/>
    <property type="resolution" value="1.70 A"/>
    <property type="chains" value="A=19-148"/>
</dbReference>
<dbReference type="PDB" id="1REZ">
    <property type="method" value="X-ray"/>
    <property type="resolution" value="1.70 A"/>
    <property type="chains" value="A=19-148"/>
</dbReference>
<dbReference type="PDB" id="1TAY">
    <property type="method" value="X-ray"/>
    <property type="resolution" value="1.70 A"/>
    <property type="chains" value="A=19-148"/>
</dbReference>
<dbReference type="PDB" id="1TBY">
    <property type="method" value="X-ray"/>
    <property type="resolution" value="1.77 A"/>
    <property type="chains" value="A=19-148"/>
</dbReference>
<dbReference type="PDB" id="1TCY">
    <property type="method" value="X-ray"/>
    <property type="resolution" value="1.70 A"/>
    <property type="chains" value="A=19-148"/>
</dbReference>
<dbReference type="PDB" id="1TDY">
    <property type="method" value="X-ray"/>
    <property type="resolution" value="1.70 A"/>
    <property type="chains" value="A=19-148"/>
</dbReference>
<dbReference type="PDB" id="1UBZ">
    <property type="method" value="X-ray"/>
    <property type="resolution" value="2.00 A"/>
    <property type="chains" value="A=19-148"/>
</dbReference>
<dbReference type="PDB" id="1W08">
    <property type="method" value="X-ray"/>
    <property type="resolution" value="2.50 A"/>
    <property type="chains" value="A=19-148"/>
</dbReference>
<dbReference type="PDB" id="1WQM">
    <property type="method" value="X-ray"/>
    <property type="resolution" value="1.80 A"/>
    <property type="chains" value="A=19-148"/>
</dbReference>
<dbReference type="PDB" id="1WQN">
    <property type="method" value="X-ray"/>
    <property type="resolution" value="1.80 A"/>
    <property type="chains" value="A=19-148"/>
</dbReference>
<dbReference type="PDB" id="1WQO">
    <property type="method" value="X-ray"/>
    <property type="resolution" value="1.80 A"/>
    <property type="chains" value="A=19-148"/>
</dbReference>
<dbReference type="PDB" id="1WQP">
    <property type="method" value="X-ray"/>
    <property type="resolution" value="1.80 A"/>
    <property type="chains" value="A=19-148"/>
</dbReference>
<dbReference type="PDB" id="1WQQ">
    <property type="method" value="X-ray"/>
    <property type="resolution" value="1.80 A"/>
    <property type="chains" value="A=19-148"/>
</dbReference>
<dbReference type="PDB" id="1WQR">
    <property type="method" value="X-ray"/>
    <property type="resolution" value="1.80 A"/>
    <property type="chains" value="A=19-148"/>
</dbReference>
<dbReference type="PDB" id="1YAM">
    <property type="method" value="X-ray"/>
    <property type="resolution" value="1.80 A"/>
    <property type="chains" value="A=19-148"/>
</dbReference>
<dbReference type="PDB" id="1YAN">
    <property type="method" value="X-ray"/>
    <property type="resolution" value="1.80 A"/>
    <property type="chains" value="A=19-148"/>
</dbReference>
<dbReference type="PDB" id="1YAO">
    <property type="method" value="X-ray"/>
    <property type="resolution" value="1.80 A"/>
    <property type="chains" value="A=19-148"/>
</dbReference>
<dbReference type="PDB" id="1YAP">
    <property type="method" value="X-ray"/>
    <property type="resolution" value="1.80 A"/>
    <property type="chains" value="A=19-148"/>
</dbReference>
<dbReference type="PDB" id="1YAQ">
    <property type="method" value="X-ray"/>
    <property type="resolution" value="1.80 A"/>
    <property type="chains" value="A=19-148"/>
</dbReference>
<dbReference type="PDB" id="207L">
    <property type="method" value="X-ray"/>
    <property type="resolution" value="1.80 A"/>
    <property type="chains" value="A=19-148"/>
</dbReference>
<dbReference type="PDB" id="208L">
    <property type="method" value="X-ray"/>
    <property type="resolution" value="2.20 A"/>
    <property type="chains" value="A=19-148"/>
</dbReference>
<dbReference type="PDB" id="2BQA">
    <property type="method" value="X-ray"/>
    <property type="resolution" value="1.80 A"/>
    <property type="chains" value="A=19-148"/>
</dbReference>
<dbReference type="PDB" id="2BQB">
    <property type="method" value="X-ray"/>
    <property type="resolution" value="1.80 A"/>
    <property type="chains" value="A=19-148"/>
</dbReference>
<dbReference type="PDB" id="2BQC">
    <property type="method" value="X-ray"/>
    <property type="resolution" value="1.80 A"/>
    <property type="chains" value="A=19-148"/>
</dbReference>
<dbReference type="PDB" id="2BQD">
    <property type="method" value="X-ray"/>
    <property type="resolution" value="1.80 A"/>
    <property type="chains" value="A=19-148"/>
</dbReference>
<dbReference type="PDB" id="2BQE">
    <property type="method" value="X-ray"/>
    <property type="resolution" value="1.80 A"/>
    <property type="chains" value="A=19-148"/>
</dbReference>
<dbReference type="PDB" id="2BQF">
    <property type="method" value="X-ray"/>
    <property type="resolution" value="1.80 A"/>
    <property type="chains" value="A=19-148"/>
</dbReference>
<dbReference type="PDB" id="2BQG">
    <property type="method" value="X-ray"/>
    <property type="resolution" value="1.80 A"/>
    <property type="chains" value="A=19-148"/>
</dbReference>
<dbReference type="PDB" id="2BQH">
    <property type="method" value="X-ray"/>
    <property type="resolution" value="1.80 A"/>
    <property type="chains" value="A=19-148"/>
</dbReference>
<dbReference type="PDB" id="2BQI">
    <property type="method" value="X-ray"/>
    <property type="resolution" value="1.80 A"/>
    <property type="chains" value="A=19-148"/>
</dbReference>
<dbReference type="PDB" id="2BQJ">
    <property type="method" value="X-ray"/>
    <property type="resolution" value="1.80 A"/>
    <property type="chains" value="A=19-148"/>
</dbReference>
<dbReference type="PDB" id="2BQK">
    <property type="method" value="X-ray"/>
    <property type="resolution" value="1.80 A"/>
    <property type="chains" value="A=19-147"/>
</dbReference>
<dbReference type="PDB" id="2BQL">
    <property type="method" value="X-ray"/>
    <property type="resolution" value="1.80 A"/>
    <property type="chains" value="A=19-148"/>
</dbReference>
<dbReference type="PDB" id="2BQM">
    <property type="method" value="X-ray"/>
    <property type="resolution" value="1.80 A"/>
    <property type="chains" value="A=19-148"/>
</dbReference>
<dbReference type="PDB" id="2BQN">
    <property type="method" value="X-ray"/>
    <property type="resolution" value="1.80 A"/>
    <property type="chains" value="A=19-148"/>
</dbReference>
<dbReference type="PDB" id="2BQO">
    <property type="method" value="X-ray"/>
    <property type="resolution" value="1.80 A"/>
    <property type="chains" value="A=19-148"/>
</dbReference>
<dbReference type="PDB" id="2HEA">
    <property type="method" value="X-ray"/>
    <property type="resolution" value="1.80 A"/>
    <property type="chains" value="A=19-148"/>
</dbReference>
<dbReference type="PDB" id="2HEB">
    <property type="method" value="X-ray"/>
    <property type="resolution" value="2.20 A"/>
    <property type="chains" value="A=19-148"/>
</dbReference>
<dbReference type="PDB" id="2HEC">
    <property type="method" value="X-ray"/>
    <property type="resolution" value="1.80 A"/>
    <property type="chains" value="A=19-148"/>
</dbReference>
<dbReference type="PDB" id="2HED">
    <property type="method" value="X-ray"/>
    <property type="resolution" value="1.80 A"/>
    <property type="chains" value="A=19-148"/>
</dbReference>
<dbReference type="PDB" id="2HEE">
    <property type="method" value="X-ray"/>
    <property type="resolution" value="1.80 A"/>
    <property type="chains" value="A=19-148"/>
</dbReference>
<dbReference type="PDB" id="2HEF">
    <property type="method" value="X-ray"/>
    <property type="resolution" value="1.80 A"/>
    <property type="chains" value="A=19-148"/>
</dbReference>
<dbReference type="PDB" id="2LHM">
    <property type="method" value="X-ray"/>
    <property type="resolution" value="1.80 A"/>
    <property type="chains" value="A=19-148"/>
</dbReference>
<dbReference type="PDB" id="2MEA">
    <property type="method" value="X-ray"/>
    <property type="resolution" value="2.20 A"/>
    <property type="chains" value="A/B=19-148"/>
</dbReference>
<dbReference type="PDB" id="2MEB">
    <property type="method" value="X-ray"/>
    <property type="resolution" value="1.80 A"/>
    <property type="chains" value="A=19-148"/>
</dbReference>
<dbReference type="PDB" id="2MEC">
    <property type="method" value="X-ray"/>
    <property type="resolution" value="2.20 A"/>
    <property type="chains" value="A/B=19-148"/>
</dbReference>
<dbReference type="PDB" id="2MED">
    <property type="method" value="X-ray"/>
    <property type="resolution" value="1.80 A"/>
    <property type="chains" value="A=19-148"/>
</dbReference>
<dbReference type="PDB" id="2MEE">
    <property type="method" value="X-ray"/>
    <property type="resolution" value="1.80 A"/>
    <property type="chains" value="A=19-148"/>
</dbReference>
<dbReference type="PDB" id="2MEF">
    <property type="method" value="X-ray"/>
    <property type="resolution" value="1.80 A"/>
    <property type="chains" value="A=19-148"/>
</dbReference>
<dbReference type="PDB" id="2MEG">
    <property type="method" value="X-ray"/>
    <property type="resolution" value="1.80 A"/>
    <property type="chains" value="A=19-148"/>
</dbReference>
<dbReference type="PDB" id="2MEH">
    <property type="method" value="X-ray"/>
    <property type="resolution" value="1.80 A"/>
    <property type="chains" value="A=19-148"/>
</dbReference>
<dbReference type="PDB" id="2MEI">
    <property type="method" value="X-ray"/>
    <property type="resolution" value="1.80 A"/>
    <property type="chains" value="A=19-148"/>
</dbReference>
<dbReference type="PDB" id="2NWD">
    <property type="method" value="X-ray"/>
    <property type="resolution" value="1.04 A"/>
    <property type="chains" value="X=19-148"/>
</dbReference>
<dbReference type="PDB" id="2ZIJ">
    <property type="method" value="X-ray"/>
    <property type="resolution" value="1.90 A"/>
    <property type="chains" value="A=19-148"/>
</dbReference>
<dbReference type="PDB" id="2ZIK">
    <property type="method" value="X-ray"/>
    <property type="resolution" value="1.81 A"/>
    <property type="chains" value="A=19-148"/>
</dbReference>
<dbReference type="PDB" id="2ZIL">
    <property type="method" value="X-ray"/>
    <property type="resolution" value="1.80 A"/>
    <property type="chains" value="A=19-148"/>
</dbReference>
<dbReference type="PDB" id="2ZWB">
    <property type="method" value="Neutron"/>
    <property type="resolution" value="1.80 A"/>
    <property type="chains" value="A=19-148"/>
</dbReference>
<dbReference type="PDB" id="3EBA">
    <property type="method" value="X-ray"/>
    <property type="resolution" value="1.85 A"/>
    <property type="chains" value="B=19-148"/>
</dbReference>
<dbReference type="PDB" id="3FE0">
    <property type="method" value="X-ray"/>
    <property type="resolution" value="1.50 A"/>
    <property type="chains" value="A=19-148"/>
</dbReference>
<dbReference type="PDB" id="3LHM">
    <property type="method" value="X-ray"/>
    <property type="resolution" value="1.80 A"/>
    <property type="chains" value="A=19-148"/>
</dbReference>
<dbReference type="PDB" id="3LN2">
    <property type="method" value="X-ray"/>
    <property type="resolution" value="2.04 A"/>
    <property type="chains" value="A/B=19-148"/>
</dbReference>
<dbReference type="PDB" id="4I0C">
    <property type="method" value="X-ray"/>
    <property type="resolution" value="1.95 A"/>
    <property type="chains" value="A/B=19-148"/>
</dbReference>
<dbReference type="PDB" id="4ML7">
    <property type="method" value="X-ray"/>
    <property type="resolution" value="1.80 A"/>
    <property type="chains" value="A/C=19-148"/>
</dbReference>
<dbReference type="PDB" id="4R0P">
    <property type="method" value="X-ray"/>
    <property type="resolution" value="1.52 A"/>
    <property type="chains" value="A=74-79"/>
</dbReference>
<dbReference type="PDB" id="5LSH">
    <property type="method" value="X-ray"/>
    <property type="resolution" value="1.06 A"/>
    <property type="chains" value="A=19-148"/>
</dbReference>
<dbReference type="PDB" id="5LVK">
    <property type="method" value="X-ray"/>
    <property type="resolution" value="2.49 A"/>
    <property type="chains" value="A/B=19-148"/>
</dbReference>
<dbReference type="PDB" id="6LFH">
    <property type="method" value="X-ray"/>
    <property type="resolution" value="1.46 A"/>
    <property type="chains" value="X=19-148"/>
</dbReference>
<dbReference type="PDB" id="7AP7">
    <property type="method" value="X-ray"/>
    <property type="resolution" value="1.15 A"/>
    <property type="chains" value="A=19-148"/>
</dbReference>
<dbReference type="PDB" id="7XF6">
    <property type="method" value="X-ray"/>
    <property type="resolution" value="1.30 A"/>
    <property type="chains" value="A=19-148"/>
</dbReference>
<dbReference type="PDB" id="7XF7">
    <property type="method" value="X-ray"/>
    <property type="resolution" value="1.55 A"/>
    <property type="chains" value="A=19-148"/>
</dbReference>
<dbReference type="PDB" id="7XF8">
    <property type="method" value="X-ray"/>
    <property type="resolution" value="1.60 A"/>
    <property type="chains" value="A=19-148"/>
</dbReference>
<dbReference type="PDB" id="8QUT">
    <property type="method" value="EM"/>
    <property type="resolution" value="2.80 A"/>
    <property type="chains" value="A/C/E/G/I=19-148"/>
</dbReference>
<dbReference type="PDB" id="8R4A">
    <property type="method" value="EM"/>
    <property type="resolution" value="2.80 A"/>
    <property type="chains" value="A/B/C/D/E/F/G/H/I=19-148"/>
</dbReference>
<dbReference type="PDBsum" id="133L"/>
<dbReference type="PDBsum" id="134L"/>
<dbReference type="PDBsum" id="1B5U"/>
<dbReference type="PDBsum" id="1B5V"/>
<dbReference type="PDBsum" id="1B5W"/>
<dbReference type="PDBsum" id="1B5X"/>
<dbReference type="PDBsum" id="1B5Y"/>
<dbReference type="PDBsum" id="1B5Z"/>
<dbReference type="PDBsum" id="1B7L"/>
<dbReference type="PDBsum" id="1B7M"/>
<dbReference type="PDBsum" id="1B7N"/>
<dbReference type="PDBsum" id="1B7O"/>
<dbReference type="PDBsum" id="1B7P"/>
<dbReference type="PDBsum" id="1B7Q"/>
<dbReference type="PDBsum" id="1B7R"/>
<dbReference type="PDBsum" id="1B7S"/>
<dbReference type="PDBsum" id="1BB3"/>
<dbReference type="PDBsum" id="1BB4"/>
<dbReference type="PDBsum" id="1BB5"/>
<dbReference type="PDBsum" id="1C43"/>
<dbReference type="PDBsum" id="1C45"/>
<dbReference type="PDBsum" id="1C46"/>
<dbReference type="PDBsum" id="1C7P"/>
<dbReference type="PDBsum" id="1CJ6"/>
<dbReference type="PDBsum" id="1CJ7"/>
<dbReference type="PDBsum" id="1CJ8"/>
<dbReference type="PDBsum" id="1CJ9"/>
<dbReference type="PDBsum" id="1CKC"/>
<dbReference type="PDBsum" id="1CKD"/>
<dbReference type="PDBsum" id="1CKF"/>
<dbReference type="PDBsum" id="1CKG"/>
<dbReference type="PDBsum" id="1CKH"/>
<dbReference type="PDBsum" id="1D6P"/>
<dbReference type="PDBsum" id="1D6Q"/>
<dbReference type="PDBsum" id="1DI3"/>
<dbReference type="PDBsum" id="1DI4"/>
<dbReference type="PDBsum" id="1DI5"/>
<dbReference type="PDBsum" id="1EQ4"/>
<dbReference type="PDBsum" id="1EQ5"/>
<dbReference type="PDBsum" id="1EQE"/>
<dbReference type="PDBsum" id="1GAY"/>
<dbReference type="PDBsum" id="1GAZ"/>
<dbReference type="PDBsum" id="1GB0"/>
<dbReference type="PDBsum" id="1GB2"/>
<dbReference type="PDBsum" id="1GB3"/>
<dbReference type="PDBsum" id="1GB5"/>
<dbReference type="PDBsum" id="1GB6"/>
<dbReference type="PDBsum" id="1GB7"/>
<dbReference type="PDBsum" id="1GB8"/>
<dbReference type="PDBsum" id="1GB9"/>
<dbReference type="PDBsum" id="1GBO"/>
<dbReference type="PDBsum" id="1GBW"/>
<dbReference type="PDBsum" id="1GBX"/>
<dbReference type="PDBsum" id="1GBY"/>
<dbReference type="PDBsum" id="1GBZ"/>
<dbReference type="PDBsum" id="1GDW"/>
<dbReference type="PDBsum" id="1GDX"/>
<dbReference type="PDBsum" id="1GE0"/>
<dbReference type="PDBsum" id="1GE1"/>
<dbReference type="PDBsum" id="1GE2"/>
<dbReference type="PDBsum" id="1GE3"/>
<dbReference type="PDBsum" id="1GE4"/>
<dbReference type="PDBsum" id="1GEV"/>
<dbReference type="PDBsum" id="1GEZ"/>
<dbReference type="PDBsum" id="1GF0"/>
<dbReference type="PDBsum" id="1GF3"/>
<dbReference type="PDBsum" id="1GF4"/>
<dbReference type="PDBsum" id="1GF5"/>
<dbReference type="PDBsum" id="1GF6"/>
<dbReference type="PDBsum" id="1GF7"/>
<dbReference type="PDBsum" id="1GF8"/>
<dbReference type="PDBsum" id="1GF9"/>
<dbReference type="PDBsum" id="1GFA"/>
<dbReference type="PDBsum" id="1GFE"/>
<dbReference type="PDBsum" id="1GFG"/>
<dbReference type="PDBsum" id="1GFH"/>
<dbReference type="PDBsum" id="1GFJ"/>
<dbReference type="PDBsum" id="1GFK"/>
<dbReference type="PDBsum" id="1GFR"/>
<dbReference type="PDBsum" id="1GFT"/>
<dbReference type="PDBsum" id="1GFU"/>
<dbReference type="PDBsum" id="1GFV"/>
<dbReference type="PDBsum" id="1HNL"/>
<dbReference type="PDBsum" id="1I1Z"/>
<dbReference type="PDBsum" id="1I20"/>
<dbReference type="PDBsum" id="1I22"/>
<dbReference type="PDBsum" id="1INU"/>
<dbReference type="PDBsum" id="1IOC"/>
<dbReference type="PDBsum" id="1IP1"/>
<dbReference type="PDBsum" id="1IP2"/>
<dbReference type="PDBsum" id="1IP3"/>
<dbReference type="PDBsum" id="1IP4"/>
<dbReference type="PDBsum" id="1IP5"/>
<dbReference type="PDBsum" id="1IP6"/>
<dbReference type="PDBsum" id="1IP7"/>
<dbReference type="PDBsum" id="1IWT"/>
<dbReference type="PDBsum" id="1IWU"/>
<dbReference type="PDBsum" id="1IWV"/>
<dbReference type="PDBsum" id="1IWW"/>
<dbReference type="PDBsum" id="1IWX"/>
<dbReference type="PDBsum" id="1IWY"/>
<dbReference type="PDBsum" id="1IWZ"/>
<dbReference type="PDBsum" id="1IX0"/>
<dbReference type="PDBsum" id="1IY3"/>
<dbReference type="PDBsum" id="1IY4"/>
<dbReference type="PDBsum" id="1JKA"/>
<dbReference type="PDBsum" id="1JKB"/>
<dbReference type="PDBsum" id="1JKC"/>
<dbReference type="PDBsum" id="1JKD"/>
<dbReference type="PDBsum" id="1JSF"/>
<dbReference type="PDBsum" id="1JWR"/>
<dbReference type="PDBsum" id="1LAA"/>
<dbReference type="PDBsum" id="1LHH"/>
<dbReference type="PDBsum" id="1LHI"/>
<dbReference type="PDBsum" id="1LHJ"/>
<dbReference type="PDBsum" id="1LHK"/>
<dbReference type="PDBsum" id="1LHL"/>
<dbReference type="PDBsum" id="1LHM"/>
<dbReference type="PDBsum" id="1LMT"/>
<dbReference type="PDBsum" id="1LOZ"/>
<dbReference type="PDBsum" id="1LYY"/>
<dbReference type="PDBsum" id="1LZ1"/>
<dbReference type="PDBsum" id="1LZ4"/>
<dbReference type="PDBsum" id="1LZ5"/>
<dbReference type="PDBsum" id="1LZ6"/>
<dbReference type="PDBsum" id="1LZR"/>
<dbReference type="PDBsum" id="1LZS"/>
<dbReference type="PDBsum" id="1OP9"/>
<dbReference type="PDBsum" id="1OUA"/>
<dbReference type="PDBsum" id="1OUB"/>
<dbReference type="PDBsum" id="1OUC"/>
<dbReference type="PDBsum" id="1OUD"/>
<dbReference type="PDBsum" id="1OUE"/>
<dbReference type="PDBsum" id="1OUF"/>
<dbReference type="PDBsum" id="1OUG"/>
<dbReference type="PDBsum" id="1OUH"/>
<dbReference type="PDBsum" id="1OUI"/>
<dbReference type="PDBsum" id="1OUJ"/>
<dbReference type="PDBsum" id="1QSW"/>
<dbReference type="PDBsum" id="1RE2"/>
<dbReference type="PDBsum" id="1REM"/>
<dbReference type="PDBsum" id="1REX"/>
<dbReference type="PDBsum" id="1REY"/>
<dbReference type="PDBsum" id="1REZ"/>
<dbReference type="PDBsum" id="1TAY"/>
<dbReference type="PDBsum" id="1TBY"/>
<dbReference type="PDBsum" id="1TCY"/>
<dbReference type="PDBsum" id="1TDY"/>
<dbReference type="PDBsum" id="1UBZ"/>
<dbReference type="PDBsum" id="1W08"/>
<dbReference type="PDBsum" id="1WQM"/>
<dbReference type="PDBsum" id="1WQN"/>
<dbReference type="PDBsum" id="1WQO"/>
<dbReference type="PDBsum" id="1WQP"/>
<dbReference type="PDBsum" id="1WQQ"/>
<dbReference type="PDBsum" id="1WQR"/>
<dbReference type="PDBsum" id="1YAM"/>
<dbReference type="PDBsum" id="1YAN"/>
<dbReference type="PDBsum" id="1YAO"/>
<dbReference type="PDBsum" id="1YAP"/>
<dbReference type="PDBsum" id="1YAQ"/>
<dbReference type="PDBsum" id="207L"/>
<dbReference type="PDBsum" id="208L"/>
<dbReference type="PDBsum" id="2BQA"/>
<dbReference type="PDBsum" id="2BQB"/>
<dbReference type="PDBsum" id="2BQC"/>
<dbReference type="PDBsum" id="2BQD"/>
<dbReference type="PDBsum" id="2BQE"/>
<dbReference type="PDBsum" id="2BQF"/>
<dbReference type="PDBsum" id="2BQG"/>
<dbReference type="PDBsum" id="2BQH"/>
<dbReference type="PDBsum" id="2BQI"/>
<dbReference type="PDBsum" id="2BQJ"/>
<dbReference type="PDBsum" id="2BQK"/>
<dbReference type="PDBsum" id="2BQL"/>
<dbReference type="PDBsum" id="2BQM"/>
<dbReference type="PDBsum" id="2BQN"/>
<dbReference type="PDBsum" id="2BQO"/>
<dbReference type="PDBsum" id="2HEA"/>
<dbReference type="PDBsum" id="2HEB"/>
<dbReference type="PDBsum" id="2HEC"/>
<dbReference type="PDBsum" id="2HED"/>
<dbReference type="PDBsum" id="2HEE"/>
<dbReference type="PDBsum" id="2HEF"/>
<dbReference type="PDBsum" id="2LHM"/>
<dbReference type="PDBsum" id="2MEA"/>
<dbReference type="PDBsum" id="2MEB"/>
<dbReference type="PDBsum" id="2MEC"/>
<dbReference type="PDBsum" id="2MED"/>
<dbReference type="PDBsum" id="2MEE"/>
<dbReference type="PDBsum" id="2MEF"/>
<dbReference type="PDBsum" id="2MEG"/>
<dbReference type="PDBsum" id="2MEH"/>
<dbReference type="PDBsum" id="2MEI"/>
<dbReference type="PDBsum" id="2NWD"/>
<dbReference type="PDBsum" id="2ZIJ"/>
<dbReference type="PDBsum" id="2ZIK"/>
<dbReference type="PDBsum" id="2ZIL"/>
<dbReference type="PDBsum" id="2ZWB"/>
<dbReference type="PDBsum" id="3EBA"/>
<dbReference type="PDBsum" id="3FE0"/>
<dbReference type="PDBsum" id="3LHM"/>
<dbReference type="PDBsum" id="3LN2"/>
<dbReference type="PDBsum" id="4I0C"/>
<dbReference type="PDBsum" id="4ML7"/>
<dbReference type="PDBsum" id="4R0P"/>
<dbReference type="PDBsum" id="5LSH"/>
<dbReference type="PDBsum" id="5LVK"/>
<dbReference type="PDBsum" id="6LFH"/>
<dbReference type="PDBsum" id="7AP7"/>
<dbReference type="PDBsum" id="7XF6"/>
<dbReference type="PDBsum" id="7XF7"/>
<dbReference type="PDBsum" id="7XF8"/>
<dbReference type="PDBsum" id="8QUT"/>
<dbReference type="PDBsum" id="8R4A"/>
<dbReference type="BMRB" id="P61626"/>
<dbReference type="EMDB" id="EMD-18663"/>
<dbReference type="EMDB" id="EMD-18883"/>
<dbReference type="SMR" id="P61626"/>
<dbReference type="BioGRID" id="110247">
    <property type="interactions" value="138"/>
</dbReference>
<dbReference type="FunCoup" id="P61626">
    <property type="interactions" value="108"/>
</dbReference>
<dbReference type="IntAct" id="P61626">
    <property type="interactions" value="55"/>
</dbReference>
<dbReference type="MINT" id="P61626"/>
<dbReference type="STRING" id="9606.ENSP00000261267"/>
<dbReference type="DrugBank" id="DB02159">
    <property type="generic name" value="(R)-Propylene glycol"/>
</dbReference>
<dbReference type="DrugBank" id="DB03487">
    <property type="generic name" value="(S)-Aspartimide"/>
</dbReference>
<dbReference type="DrugBank" id="DB02759">
    <property type="generic name" value="4-methyl-umbelliferyl-N-acetyl-chitobiose"/>
</dbReference>
<dbReference type="DrugBank" id="DB03006">
    <property type="generic name" value="Arsanilic acid"/>
</dbReference>
<dbReference type="DrugBank" id="DB00128">
    <property type="generic name" value="Aspartic acid"/>
</dbReference>
<dbReference type="DrugBank" id="DB03189">
    <property type="generic name" value="Cu-Cyclam"/>
</dbReference>
<dbReference type="DrugBank" id="DB03967">
    <property type="generic name" value="Dodecyl sulfate"/>
</dbReference>
<dbReference type="DrugBank" id="DB04268">
    <property type="generic name" value="Methylumbelliferyl chitotriose"/>
</dbReference>
<dbReference type="DrugBank" id="DB03013">
    <property type="generic name" value="N-acetyl-beta-D-glucosaminyl-(1-&gt;4)-N-acetyl-beta-D-glucosamine"/>
</dbReference>
<dbReference type="DrugBank" id="DB03120">
    <property type="generic name" value="p-Toluenesulfonic acid"/>
</dbReference>
<dbReference type="DrugBank" id="DB03175">
    <property type="generic name" value="Propyl alcohol"/>
</dbReference>
<dbReference type="DrugBank" id="DB11182">
    <property type="generic name" value="Rose bengal"/>
</dbReference>
<dbReference type="DrugBank" id="DB02772">
    <property type="generic name" value="Sucrose"/>
</dbReference>
<dbReference type="DrugBank" id="DB04194">
    <property type="generic name" value="Triacetylchitotriose"/>
</dbReference>
<dbReference type="DrugBank" id="DB06912">
    <property type="generic name" value="UNDECA-3,7-DIENE-1,3,7,11-TETRACARBALDEHYDE"/>
</dbReference>
<dbReference type="CAZy" id="GH22">
    <property type="family name" value="Glycoside Hydrolase Family 22"/>
</dbReference>
<dbReference type="GlyGen" id="P61626">
    <property type="glycosylation" value="5 sites, 1 O-linked glycan (1 site)"/>
</dbReference>
<dbReference type="iPTMnet" id="P61626"/>
<dbReference type="PhosphoSitePlus" id="P61626"/>
<dbReference type="SwissPalm" id="P61626"/>
<dbReference type="BioMuta" id="LYZ"/>
<dbReference type="DMDM" id="48428995"/>
<dbReference type="jPOST" id="P61626"/>
<dbReference type="MassIVE" id="P61626"/>
<dbReference type="PaxDb" id="9606-ENSP00000261267"/>
<dbReference type="PeptideAtlas" id="P61626"/>
<dbReference type="PRIDE" id="P61626"/>
<dbReference type="ProteomicsDB" id="57328"/>
<dbReference type="TopDownProteomics" id="P61626"/>
<dbReference type="ABCD" id="P61626">
    <property type="antibodies" value="12 sequenced antibodies"/>
</dbReference>
<dbReference type="Antibodypedia" id="3512">
    <property type="antibodies" value="1004 antibodies from 42 providers"/>
</dbReference>
<dbReference type="DNASU" id="4069"/>
<dbReference type="Ensembl" id="ENST00000261267.7">
    <property type="protein sequence ID" value="ENSP00000261267.2"/>
    <property type="gene ID" value="ENSG00000090382.7"/>
</dbReference>
<dbReference type="GeneID" id="4069"/>
<dbReference type="KEGG" id="hsa:4069"/>
<dbReference type="MANE-Select" id="ENST00000261267.7">
    <property type="protein sequence ID" value="ENSP00000261267.2"/>
    <property type="RefSeq nucleotide sequence ID" value="NM_000239.3"/>
    <property type="RefSeq protein sequence ID" value="NP_000230.1"/>
</dbReference>
<dbReference type="UCSC" id="uc001suw.3">
    <property type="organism name" value="human"/>
</dbReference>
<dbReference type="AGR" id="HGNC:6740"/>
<dbReference type="CTD" id="4069"/>
<dbReference type="DisGeNET" id="4069"/>
<dbReference type="GeneCards" id="LYZ"/>
<dbReference type="HGNC" id="HGNC:6740">
    <property type="gene designation" value="LYZ"/>
</dbReference>
<dbReference type="HPA" id="ENSG00000090382">
    <property type="expression patterns" value="Tissue enhanced (bone marrow, salivary gland, stomach)"/>
</dbReference>
<dbReference type="MalaCards" id="LYZ"/>
<dbReference type="MIM" id="153450">
    <property type="type" value="gene"/>
</dbReference>
<dbReference type="MIM" id="620658">
    <property type="type" value="phenotype"/>
</dbReference>
<dbReference type="neXtProt" id="NX_P61626"/>
<dbReference type="OpenTargets" id="ENSG00000090382"/>
<dbReference type="Orphanet" id="93561">
    <property type="disease" value="ALys amyloidosis"/>
</dbReference>
<dbReference type="PharmGKB" id="PA30503"/>
<dbReference type="VEuPathDB" id="HostDB:ENSG00000090382"/>
<dbReference type="eggNOG" id="ENOG502S1S1">
    <property type="taxonomic scope" value="Eukaryota"/>
</dbReference>
<dbReference type="GeneTree" id="ENSGT00940000153832"/>
<dbReference type="HOGENOM" id="CLU_111620_0_1_1"/>
<dbReference type="InParanoid" id="P61626"/>
<dbReference type="OMA" id="VYERCEF"/>
<dbReference type="OrthoDB" id="17373at2759"/>
<dbReference type="PAN-GO" id="P61626">
    <property type="GO annotations" value="3 GO annotations based on evolutionary models"/>
</dbReference>
<dbReference type="PhylomeDB" id="P61626"/>
<dbReference type="TreeFam" id="TF324882"/>
<dbReference type="BRENDA" id="3.2.1.17">
    <property type="organism ID" value="2681"/>
</dbReference>
<dbReference type="PathwayCommons" id="P61626"/>
<dbReference type="Reactome" id="R-HSA-6798695">
    <property type="pathway name" value="Neutrophil degranulation"/>
</dbReference>
<dbReference type="Reactome" id="R-HSA-6803157">
    <property type="pathway name" value="Antimicrobial peptides"/>
</dbReference>
<dbReference type="Reactome" id="R-HSA-977225">
    <property type="pathway name" value="Amyloid fiber formation"/>
</dbReference>
<dbReference type="SignaLink" id="P61626"/>
<dbReference type="SIGNOR" id="P61626"/>
<dbReference type="BioGRID-ORCS" id="4069">
    <property type="hits" value="19 hits in 1171 CRISPR screens"/>
</dbReference>
<dbReference type="CD-CODE" id="232F8A39">
    <property type="entry name" value="P-body"/>
</dbReference>
<dbReference type="ChiTaRS" id="LYZ">
    <property type="organism name" value="human"/>
</dbReference>
<dbReference type="EvolutionaryTrace" id="P61626"/>
<dbReference type="GeneWiki" id="Lysozyme"/>
<dbReference type="GenomeRNAi" id="4069"/>
<dbReference type="Pharos" id="P61626">
    <property type="development level" value="Tbio"/>
</dbReference>
<dbReference type="PRO" id="PR:P61626"/>
<dbReference type="Proteomes" id="UP000005640">
    <property type="component" value="Chromosome 12"/>
</dbReference>
<dbReference type="RNAct" id="P61626">
    <property type="molecule type" value="protein"/>
</dbReference>
<dbReference type="Bgee" id="ENSG00000090382">
    <property type="expression patterns" value="Expressed in monocyte and 185 other cell types or tissues"/>
</dbReference>
<dbReference type="ExpressionAtlas" id="P61626">
    <property type="expression patterns" value="baseline and differential"/>
</dbReference>
<dbReference type="GO" id="GO:0035578">
    <property type="term" value="C:azurophil granule lumen"/>
    <property type="evidence" value="ECO:0000304"/>
    <property type="project" value="Reactome"/>
</dbReference>
<dbReference type="GO" id="GO:0070062">
    <property type="term" value="C:extracellular exosome"/>
    <property type="evidence" value="ECO:0007005"/>
    <property type="project" value="UniProtKB"/>
</dbReference>
<dbReference type="GO" id="GO:0005576">
    <property type="term" value="C:extracellular region"/>
    <property type="evidence" value="ECO:0000304"/>
    <property type="project" value="Reactome"/>
</dbReference>
<dbReference type="GO" id="GO:0005615">
    <property type="term" value="C:extracellular space"/>
    <property type="evidence" value="ECO:0000314"/>
    <property type="project" value="UniProtKB"/>
</dbReference>
<dbReference type="GO" id="GO:0035580">
    <property type="term" value="C:specific granule lumen"/>
    <property type="evidence" value="ECO:0000304"/>
    <property type="project" value="Reactome"/>
</dbReference>
<dbReference type="GO" id="GO:1904724">
    <property type="term" value="C:tertiary granule lumen"/>
    <property type="evidence" value="ECO:0000304"/>
    <property type="project" value="Reactome"/>
</dbReference>
<dbReference type="GO" id="GO:0042802">
    <property type="term" value="F:identical protein binding"/>
    <property type="evidence" value="ECO:0000353"/>
    <property type="project" value="IntAct"/>
</dbReference>
<dbReference type="GO" id="GO:0003796">
    <property type="term" value="F:lysozyme activity"/>
    <property type="evidence" value="ECO:0000318"/>
    <property type="project" value="GO_Central"/>
</dbReference>
<dbReference type="GO" id="GO:0019730">
    <property type="term" value="P:antimicrobial humoral response"/>
    <property type="evidence" value="ECO:0000304"/>
    <property type="project" value="Reactome"/>
</dbReference>
<dbReference type="GO" id="GO:0042742">
    <property type="term" value="P:defense response to bacterium"/>
    <property type="evidence" value="ECO:0000314"/>
    <property type="project" value="UniProtKB"/>
</dbReference>
<dbReference type="GO" id="GO:0050829">
    <property type="term" value="P:defense response to Gram-negative bacterium"/>
    <property type="evidence" value="ECO:0000318"/>
    <property type="project" value="GO_Central"/>
</dbReference>
<dbReference type="GO" id="GO:0050830">
    <property type="term" value="P:defense response to Gram-positive bacterium"/>
    <property type="evidence" value="ECO:0000314"/>
    <property type="project" value="UniProtKB"/>
</dbReference>
<dbReference type="GO" id="GO:0006954">
    <property type="term" value="P:inflammatory response"/>
    <property type="evidence" value="ECO:0000304"/>
    <property type="project" value="UniProtKB"/>
</dbReference>
<dbReference type="GO" id="GO:0031640">
    <property type="term" value="P:killing of cells of another organism"/>
    <property type="evidence" value="ECO:0000314"/>
    <property type="project" value="UniProtKB"/>
</dbReference>
<dbReference type="CDD" id="cd16897">
    <property type="entry name" value="LYZ_C"/>
    <property type="match status" value="1"/>
</dbReference>
<dbReference type="FunFam" id="1.10.530.10:FF:000001">
    <property type="entry name" value="Lysozyme C"/>
    <property type="match status" value="1"/>
</dbReference>
<dbReference type="Gene3D" id="1.10.530.10">
    <property type="match status" value="1"/>
</dbReference>
<dbReference type="InterPro" id="IPR001916">
    <property type="entry name" value="Glyco_hydro_22"/>
</dbReference>
<dbReference type="InterPro" id="IPR019799">
    <property type="entry name" value="Glyco_hydro_22_CS"/>
</dbReference>
<dbReference type="InterPro" id="IPR000974">
    <property type="entry name" value="Glyco_hydro_22_lys"/>
</dbReference>
<dbReference type="InterPro" id="IPR023346">
    <property type="entry name" value="Lysozyme-like_dom_sf"/>
</dbReference>
<dbReference type="PANTHER" id="PTHR11407">
    <property type="entry name" value="LYSOZYME C"/>
    <property type="match status" value="1"/>
</dbReference>
<dbReference type="PANTHER" id="PTHR11407:SF28">
    <property type="entry name" value="LYSOZYME C"/>
    <property type="match status" value="1"/>
</dbReference>
<dbReference type="Pfam" id="PF00062">
    <property type="entry name" value="Lys"/>
    <property type="match status" value="1"/>
</dbReference>
<dbReference type="PRINTS" id="PR00137">
    <property type="entry name" value="LYSOZYME"/>
</dbReference>
<dbReference type="PRINTS" id="PR00135">
    <property type="entry name" value="LYZLACT"/>
</dbReference>
<dbReference type="SMART" id="SM00263">
    <property type="entry name" value="LYZ1"/>
    <property type="match status" value="1"/>
</dbReference>
<dbReference type="SUPFAM" id="SSF53955">
    <property type="entry name" value="Lysozyme-like"/>
    <property type="match status" value="1"/>
</dbReference>
<dbReference type="PROSITE" id="PS00128">
    <property type="entry name" value="GLYCOSYL_HYDROL_F22_1"/>
    <property type="match status" value="1"/>
</dbReference>
<dbReference type="PROSITE" id="PS51348">
    <property type="entry name" value="GLYCOSYL_HYDROL_F22_2"/>
    <property type="match status" value="1"/>
</dbReference>
<comment type="function">
    <text>Lysozymes have primarily a bacteriolytic function; those in tissues and body fluids are associated with the monocyte-macrophage system and enhance the activity of immunoagents.</text>
</comment>
<comment type="catalytic activity">
    <reaction>
        <text>Hydrolysis of (1-&gt;4)-beta-linkages between N-acetylmuramic acid and N-acetyl-D-glucosamine residues in a peptidoglycan and between N-acetyl-D-glucosamine residues in chitodextrins.</text>
        <dbReference type="EC" id="3.2.1.17"/>
    </reaction>
</comment>
<comment type="subunit">
    <text>Monomer.</text>
</comment>
<comment type="interaction">
    <interactant intactId="EBI-355360">
        <id>P61626</id>
    </interactant>
    <interactant intactId="EBI-355360">
        <id>P61626</id>
        <label>LYZ</label>
    </interactant>
    <organismsDiffer>false</organismsDiffer>
    <experiments>3</experiments>
</comment>
<comment type="subcellular location">
    <subcellularLocation>
        <location>Secreted</location>
    </subcellularLocation>
</comment>
<comment type="disease" evidence="7">
    <disease id="DI-06895">
        <name>Amyloidosis, hereditary systemic 5</name>
        <acronym>AMYLD5</acronym>
        <description>A form of hereditary systemic amyloidosis, a disorder characterized by amyloid deposition in multiple tissues resulting in a wide clinical spectrum. AMYLD5 primarily affects the viscera, and the predominant clinical features are renal dysfunction of varying severity, and intra-abdominal bleeding. Inheritance is autosomal dominant.</description>
        <dbReference type="MIM" id="620658"/>
    </disease>
    <text>The disease is caused by variants affecting the gene represented in this entry.</text>
</comment>
<comment type="miscellaneous">
    <text>Lysozyme C is capable of both hydrolysis and transglycosylation; it also shows a slight esterase activity. It acts rapidly on both peptide-substituted and unsubstituted peptidoglycan, and slowly on chitin oligosaccharides.</text>
</comment>
<comment type="similarity">
    <text evidence="1">Belongs to the glycosyl hydrolase 22 family.</text>
</comment>
<comment type="sequence caution" evidence="8">
    <conflict type="erroneous initiation">
        <sequence resource="EMBL-CDS" id="CAA32175"/>
    </conflict>
</comment>
<comment type="online information" name="Wikipedia">
    <link uri="https://en.wikipedia.org/wiki/Lysozyme"/>
    <text>Lysozyme entry</text>
</comment>
<sequence length="148" mass="16537">MKALIVLGLVLLSVTVQGKVFERCELARTLKRLGMDGYRGISLANWMCLAKWESGYNTRATNYNAGDRSTDYGIFQINSRYWCNDGKTPGAVNACHLSCSALLQDNIADAVACAKRVVRDPQGIRAWVAWRNRCQNRDVRQYVQGCGV</sequence>
<reference key="1">
    <citation type="journal article" date="1988" name="Gene">
        <title>Cloning of human lysozyme gene and expression in the yeast Saccharomyces cerevisiae.</title>
        <authorList>
            <person name="Castanon M.J."/>
            <person name="Spevak W."/>
            <person name="Adolf G.R."/>
            <person name="Chlebowicz-Sledziewska E."/>
            <person name="Sledziewski A."/>
        </authorList>
    </citation>
    <scope>NUCLEOTIDE SEQUENCE [MRNA]</scope>
</reference>
<reference key="2">
    <citation type="journal article" date="1988" name="Proc. Natl. Acad. Sci. U.S.A.">
        <title>Cloning the human lysozyme cDNA: inverted Alu repeat in the mRNA and in situ hybridization for macrophages and Paneth cells.</title>
        <authorList>
            <person name="Chung L.P."/>
            <person name="Keshav S."/>
            <person name="Gordon S."/>
        </authorList>
    </citation>
    <scope>NUCLEOTIDE SEQUENCE [MRNA]</scope>
</reference>
<reference key="3">
    <citation type="journal article" date="1988" name="Biochem. Biophys. Res. Commun.">
        <title>Human lysozyme: sequencing of a cDNA, and expression and secretion by Saccharomyces cerevisiae.</title>
        <authorList>
            <person name="Yoshimura K."/>
            <person name="Toibana A."/>
            <person name="Nakahama K."/>
        </authorList>
    </citation>
    <scope>NUCLEOTIDE SEQUENCE [MRNA]</scope>
</reference>
<reference key="4">
    <citation type="journal article" date="1989" name="Eur. J. Biochem.">
        <title>The human lysozyme gene. Sequence organization and chromosomal localization.</title>
        <authorList>
            <person name="Peters C.W.B."/>
            <person name="Kruse U."/>
            <person name="Pollwein R."/>
            <person name="Grzeschik K.H."/>
            <person name="Sippel A.E."/>
        </authorList>
    </citation>
    <scope>NUCLEOTIDE SEQUENCE [GENOMIC DNA]</scope>
</reference>
<reference key="5">
    <citation type="journal article" date="1993" name="Sheng Wu Hua Hsueh Tsa Chih">
        <title>The cloning, sequencing and analysis of Chinese human lysozyme gene cDNA amplified with RT-PCR from human placental total RNA.</title>
        <authorList>
            <person name="Huang B."/>
            <person name="Zhao C."/>
            <person name="Lei X."/>
            <person name="Cai L."/>
        </authorList>
    </citation>
    <scope>NUCLEOTIDE SEQUENCE [MRNA]</scope>
</reference>
<reference key="6">
    <citation type="journal article" date="2004" name="Genome Res.">
        <title>The status, quality, and expansion of the NIH full-length cDNA project: the Mammalian Gene Collection (MGC).</title>
        <authorList>
            <consortium name="The MGC Project Team"/>
        </authorList>
    </citation>
    <scope>NUCLEOTIDE SEQUENCE [LARGE SCALE MRNA]</scope>
    <source>
        <tissue>Colon</tissue>
    </source>
</reference>
<reference key="7">
    <citation type="journal article" date="1971" name="Nature New Biol.">
        <title>Primary structure of lysozymes from man and goose.</title>
        <authorList>
            <person name="Canfield R.E."/>
            <person name="Kammerman S."/>
            <person name="Sobel H.H."/>
            <person name="Morgan F.J."/>
        </authorList>
    </citation>
    <scope>PROTEIN SEQUENCE OF 19-148</scope>
    <source>
        <tissue>Urine</tissue>
    </source>
</reference>
<reference key="8">
    <citation type="journal article" date="1972" name="FEBS Lett.">
        <title>A Val-Val sequence found in a human monocytic leukemia lysozyme.</title>
        <authorList>
            <person name="Thomsen J."/>
            <person name="Lund E.H."/>
            <person name="Kristiansen K."/>
            <person name="Brunfeldt K."/>
            <person name="Malmquist J."/>
        </authorList>
    </citation>
    <scope>PROTEIN SEQUENCE OF 19-148</scope>
    <scope>SEQUENCE REVISION TO 118</scope>
    <source>
        <tissue>Urine</tissue>
    </source>
</reference>
<reference key="9">
    <citation type="journal article" date="1971" name="Helv. Chim. Acta">
        <title>Human milk lysozyme: unpublished data concerning the establishment of the complete primary structure; comparison with lysozymes of various origins.</title>
        <authorList>
            <person name="Jolles J."/>
            <person name="Jolles P."/>
        </authorList>
    </citation>
    <scope>PROTEIN SEQUENCE OF 19-148</scope>
    <source>
        <tissue>Milk</tissue>
    </source>
</reference>
<reference key="10">
    <citation type="journal article" date="1972" name="FEBS Lett.">
        <title>Comparison between human and bird lysozymes: note concerning the previously observed deletion.</title>
        <authorList>
            <person name="Jolles J."/>
            <person name="Jolles P."/>
        </authorList>
    </citation>
    <scope>PROTEIN SEQUENCE OF 19-148</scope>
    <scope>SEQUENCE REVISION TO 118</scope>
    <source>
        <tissue>Milk</tissue>
    </source>
</reference>
<reference key="11">
    <citation type="journal article" date="2015" name="J. Proteome Res.">
        <title>Human basal tear peptidome characterization by CID, HCD, and ETD followed by in silico and in vitro analyses for antimicrobial peptide identification.</title>
        <authorList>
            <person name="Azkargorta M."/>
            <person name="Soria J."/>
            <person name="Ojeda C."/>
            <person name="Guzman F."/>
            <person name="Acera A."/>
            <person name="Iloro I."/>
            <person name="Suarez T."/>
            <person name="Elortza F."/>
        </authorList>
    </citation>
    <scope>PROTEIN SEQUENCE OF 19-41 AND 96-148</scope>
    <scope>IDENTIFICATION BY MASS SPECTROMETRY</scope>
    <source>
        <tissue>Tear</tissue>
    </source>
</reference>
<reference key="12">
    <citation type="journal article" date="1993" name="Biochem. J.">
        <title>Indication of possible post-translational formation of disulphide bonds in the beta-sheet domain of human lysozyme.</title>
        <authorList>
            <person name="Kanaya E."/>
            <person name="Ishihara K."/>
            <person name="Tsunasawa S."/>
            <person name="Nokihara K."/>
            <person name="Kikuchi M."/>
        </authorList>
    </citation>
    <scope>FOLDING</scope>
    <scope>MUTAGENESIS</scope>
</reference>
<reference key="13">
    <citation type="journal article" date="2011" name="BMC Syst. Biol.">
        <title>Initial characterization of the human central proteome.</title>
        <authorList>
            <person name="Burkard T.R."/>
            <person name="Planyavsky M."/>
            <person name="Kaupe I."/>
            <person name="Breitwieser F.P."/>
            <person name="Buerckstuemmer T."/>
            <person name="Bennett K.L."/>
            <person name="Superti-Furga G."/>
            <person name="Colinge J."/>
        </authorList>
    </citation>
    <scope>IDENTIFICATION BY MASS SPECTROMETRY [LARGE SCALE ANALYSIS]</scope>
</reference>
<reference key="14">
    <citation type="journal article" date="2015" name="Proteomics">
        <title>N-terminome analysis of the human mitochondrial proteome.</title>
        <authorList>
            <person name="Vaca Jacome A.S."/>
            <person name="Rabilloud T."/>
            <person name="Schaeffer-Reiss C."/>
            <person name="Rompais M."/>
            <person name="Ayoub D."/>
            <person name="Lane L."/>
            <person name="Bairoch A."/>
            <person name="Van Dorsselaer A."/>
            <person name="Carapito C."/>
        </authorList>
    </citation>
    <scope>IDENTIFICATION BY MASS SPECTROMETRY [LARGE SCALE ANALYSIS]</scope>
</reference>
<reference key="15">
    <citation type="book" date="1974" name="Lysozyme">
        <title>The high resolution X-ray study of human. lysozyme: a preliminary analysis.</title>
        <editorList>
            <person name="Osserman E.F."/>
            <person name="Canfield R.E."/>
            <person name="Beychok S."/>
        </editorList>
        <authorList>
            <person name="Banyard S.H."/>
            <person name="Blake C.C.F."/>
            <person name="Swan I.D.A."/>
        </authorList>
    </citation>
    <scope>X-RAY CRYSTALLOGRAPHY (2.5 ANGSTROMS)</scope>
</reference>
<reference key="16">
    <citation type="journal article" date="1981" name="J. Mol. Biol.">
        <title>Refinement of human lysozyme at 1.5-A resolution analysis of non-bonded and hydrogen-bond interactions.</title>
        <authorList>
            <person name="Artymiuk P.J."/>
            <person name="Blake C.C.F."/>
        </authorList>
    </citation>
    <scope>X-RAY CRYSTALLOGRAPHY (1.5 ANGSTROMS)</scope>
</reference>
<reference key="17">
    <citation type="journal article" date="1983" name="J. Mol. Biol.">
        <title>X-ray studies of water in crystals of lysozyme.</title>
        <authorList>
            <person name="Blake C.C.F."/>
            <person name="Pulford W.C.A."/>
            <person name="Artymiuk P.J."/>
        </authorList>
    </citation>
    <scope>X-RAY CRYSTALLOGRAPHY (1.5 ANGSTROMS)</scope>
</reference>
<reference key="18">
    <citation type="journal article" date="1991" name="J. Biol. Chem.">
        <title>The crystal structure of a mutant human lysozyme C77/95A with increased secretion efficiency in yeast.</title>
        <authorList>
            <person name="Inaka K."/>
            <person name="Taniyama Y."/>
            <person name="Kikuchi M."/>
            <person name="Morikawa K."/>
            <person name="Matsushima M."/>
        </authorList>
    </citation>
    <scope>X-RAY CRYSTALLOGRAPHY (1.8 ANGSTROMS) OF MUTANT ALA-99 AND ALA-113</scope>
</reference>
<reference key="19">
    <citation type="journal article" date="1998" name="Acta Crystallogr. D">
        <title>Structures of monoclinic lysozyme iodide at 1.6 A and of triclinic lysozyme nitrate at 1.1 A.</title>
        <authorList>
            <person name="Steinrauf L.K."/>
        </authorList>
    </citation>
    <scope>X-RAY CRYSTALLOGRAPHY (1.6 AND 1.1 ANGSTROMS)</scope>
</reference>
<reference key="20">
    <citation type="journal article" date="1990" name="Biochemistry">
        <title>1H NMR studies of human lysozyme: spectral assignment and comparison with hen lysozyme.</title>
        <authorList>
            <person name="Redfield C."/>
            <person name="Dobson C.M."/>
        </authorList>
    </citation>
    <scope>STRUCTURE BY NMR</scope>
</reference>
<reference key="21">
    <citation type="journal article" date="1991" name="J. Biochem.">
        <title>1H and 15N NMR study of human lysozyme.</title>
        <authorList>
            <person name="Ohkubo T."/>
            <person name="Taniyama Y."/>
            <person name="Kikuchi M."/>
        </authorList>
    </citation>
    <scope>STRUCTURE BY NMR</scope>
</reference>
<reference key="22">
    <citation type="journal article" date="1993" name="Nature">
        <title>Human lysozyme gene mutations cause hereditary systemic amyloidosis.</title>
        <authorList>
            <person name="Pepy M.B."/>
            <person name="Hawkins P.N."/>
            <person name="Booth D.R."/>
            <person name="Vigushin D.M."/>
            <person name="Tennent G.A."/>
            <person name="Soutar A.K."/>
            <person name="Totty N."/>
            <person name="Nguyen O."/>
            <person name="Blake C.C.F."/>
            <person name="Terry C.J."/>
            <person name="Feest T.G."/>
            <person name="Zalin A.M."/>
            <person name="Hsuan J.J."/>
        </authorList>
    </citation>
    <scope>VARIANTS AMYLD5 THR-74 AND HIS-85</scope>
    <scope>INVOLVEMENT IN AMYLD5</scope>
</reference>
<proteinExistence type="evidence at protein level"/>